<protein>
    <recommendedName>
        <fullName>Histone H3.3</fullName>
    </recommendedName>
    <alternativeName>
        <fullName>H3.2</fullName>
    </alternativeName>
</protein>
<comment type="function">
    <text>Variant histone H3 which replaces conventional H3 in a wide range of nucleosomes in active genes. Constitutes the predominant form of histone H3 in non-dividing cells and is incorporated into chromatin independently of DNA synthesis. Deposited at sites of nucleosomal displacement throughout transcribed genes, suggesting that it represents an epigenetic imprint of transcriptionally active chromatin. Nucleosomes wrap and compact DNA into chromatin, limiting DNA accessibility to the cellular machineries which require DNA as a template. Histones thereby play a central role in transcription regulation, DNA repair, DNA replication and chromosomal stability. DNA accessibility is regulated via a complex set of post-translational modifications of histones, also called histone code, and nucleosome remodeling.</text>
</comment>
<comment type="subunit">
    <text>The nucleosome is a histone octamer containing two molecules each of H2A, H2B, H3 and H4 assembled in one H3-H4 heterotetramer and two H2A-H2B heterodimers. The octamer wraps approximately 147 bp of DNA.</text>
</comment>
<comment type="subcellular location">
    <subcellularLocation>
        <location evidence="1">Nucleus</location>
    </subcellularLocation>
    <subcellularLocation>
        <location evidence="1">Chromosome</location>
    </subcellularLocation>
</comment>
<comment type="PTM">
    <text evidence="1">Acetylation is generally linked to gene activation. Can be acetylated to form H3K9ac, H3K14ac, H3K18ac and H3K23ac. H3K9ac could compete with H3K9me and prevent gene silencing. H3K9ac is restricted to euchromatin (By similarity).</text>
</comment>
<comment type="PTM">
    <text evidence="1">Methylated to form mainly H3K4me, H3K9me, H3K18me, H3K23me, H3K27me and H3K36me. H3K4me1/2/3, H3K9me3, H3K27me3 and H3K36me1/2/3 are typical marks for euchromatin, whereas heterochromatic chromocenters are enriched in H3K9me1/2 and H3K27me1/2. H2BK143ub1 is probably prerequisite for H3K4me (By similarity).</text>
</comment>
<comment type="PTM">
    <text evidence="1">Can be phosphorylated to form H3S10ph, H3T11ph and H3S28ph.</text>
</comment>
<comment type="similarity">
    <text evidence="3">Belongs to the histone H3 family.</text>
</comment>
<comment type="caution">
    <text evidence="3">To ensure consistency between histone entries, we follow the 'Brno' nomenclature for histone modifications, with positions referring to those used in the literature for the 'closest' model organism. Due to slight variations in histone sequences between organisms and to the presence of initiator methionine in UniProtKB/Swiss-Prot sequences, the actual positions of modified amino acids in the sequence generally differ. In this entry the following conventions are used: H3K4me = methylated Lys-5; H3K9ac = acetylated Lys-10; H3K9me = methylated Lys-10; H3S10ph = phosphorylated Ser-11; H3T11ph = phosphorylated Thr-12; H3K14ac = acetylated Lys-15; H3K18ac = acetylated Lys-19; H3K18me = methylated Lys-19; H3K23ac = acetylated Lys-24; H3K23me = methylated Lys-24; H3K27me = methylated Lys-28; H3S28ph = phosphorylated Ser-29; H3K36me = methylated Lys-37.</text>
</comment>
<keyword id="KW-0007">Acetylation</keyword>
<keyword id="KW-0158">Chromosome</keyword>
<keyword id="KW-0238">DNA-binding</keyword>
<keyword id="KW-0488">Methylation</keyword>
<keyword id="KW-0544">Nucleosome core</keyword>
<keyword id="KW-0539">Nucleus</keyword>
<keyword id="KW-0597">Phosphoprotein</keyword>
<keyword id="KW-1185">Reference proteome</keyword>
<dbReference type="EMBL" id="CM000128">
    <property type="protein sequence ID" value="EAY90303.1"/>
    <property type="molecule type" value="Genomic_DNA"/>
</dbReference>
<dbReference type="EMBL" id="CR855170">
    <property type="protein sequence ID" value="CAH67105.1"/>
    <property type="molecule type" value="Genomic_DNA"/>
</dbReference>
<dbReference type="EMBL" id="CR855178">
    <property type="protein sequence ID" value="CAH67180.1"/>
    <property type="molecule type" value="Genomic_DNA"/>
</dbReference>
<dbReference type="BMRB" id="A2XHJ3"/>
<dbReference type="SMR" id="A2XHJ3"/>
<dbReference type="STRING" id="39946.A2XHJ3"/>
<dbReference type="EnsemblPlants" id="BGIOSGA012789-TA">
    <property type="protein sequence ID" value="BGIOSGA012789-PA"/>
    <property type="gene ID" value="BGIOSGA012789"/>
</dbReference>
<dbReference type="EnsemblPlants" id="BGIOSGA016512-TA">
    <property type="protein sequence ID" value="BGIOSGA016512-PA"/>
    <property type="gene ID" value="BGIOSGA016512"/>
</dbReference>
<dbReference type="EnsemblPlants" id="OsGoSa_06g0002070.01">
    <property type="protein sequence ID" value="OsGoSa_06g0002070.01"/>
    <property type="gene ID" value="OsGoSa_06g0002070"/>
</dbReference>
<dbReference type="EnsemblPlants" id="OsIR64_06g0002110.01">
    <property type="protein sequence ID" value="OsIR64_06g0002110.01"/>
    <property type="gene ID" value="OsIR64_06g0002110"/>
</dbReference>
<dbReference type="EnsemblPlants" id="OsKYG_06g0002080.01">
    <property type="protein sequence ID" value="OsKYG_06g0002080.01"/>
    <property type="gene ID" value="OsKYG_06g0002080"/>
</dbReference>
<dbReference type="EnsemblPlants" id="OsLaMu_06g0001950.01">
    <property type="protein sequence ID" value="OsLaMu_06g0001950.01"/>
    <property type="gene ID" value="OsLaMu_06g0001950"/>
</dbReference>
<dbReference type="EnsemblPlants" id="OsLima_06g0002210.01">
    <property type="protein sequence ID" value="OsLima_06g0002210.01"/>
    <property type="gene ID" value="OsLima_06g0002210"/>
</dbReference>
<dbReference type="EnsemblPlants" id="OsLiXu_06g0002090.01">
    <property type="protein sequence ID" value="OsLiXu_06g0002090.01"/>
    <property type="gene ID" value="OsLiXu_06g0002090"/>
</dbReference>
<dbReference type="EnsemblPlants" id="OsMH63_06G002080_01">
    <property type="protein sequence ID" value="OsMH63_06G002080_01"/>
    <property type="gene ID" value="OsMH63_06G002080"/>
</dbReference>
<dbReference type="EnsemblPlants" id="OsPr106_06g0002130.01">
    <property type="protein sequence ID" value="OsPr106_06g0002130.01"/>
    <property type="gene ID" value="OsPr106_06g0002130"/>
</dbReference>
<dbReference type="EnsemblPlants" id="OsZS97_06G002060_01">
    <property type="protein sequence ID" value="OsZS97_06G002060_01"/>
    <property type="gene ID" value="OsZS97_06G002060"/>
</dbReference>
<dbReference type="Gramene" id="BGIOSGA012789-TA">
    <property type="protein sequence ID" value="BGIOSGA012789-PA"/>
    <property type="gene ID" value="BGIOSGA012789"/>
</dbReference>
<dbReference type="Gramene" id="BGIOSGA016512-TA">
    <property type="protein sequence ID" value="BGIOSGA016512-PA"/>
    <property type="gene ID" value="BGIOSGA016512"/>
</dbReference>
<dbReference type="Gramene" id="OsGoSa_06g0002070.01">
    <property type="protein sequence ID" value="OsGoSa_06g0002070.01"/>
    <property type="gene ID" value="OsGoSa_06g0002070"/>
</dbReference>
<dbReference type="Gramene" id="OsIR64_06g0002110.01">
    <property type="protein sequence ID" value="OsIR64_06g0002110.01"/>
    <property type="gene ID" value="OsIR64_06g0002110"/>
</dbReference>
<dbReference type="Gramene" id="OsKYG_06g0002080.01">
    <property type="protein sequence ID" value="OsKYG_06g0002080.01"/>
    <property type="gene ID" value="OsKYG_06g0002080"/>
</dbReference>
<dbReference type="Gramene" id="OsLaMu_06g0001950.01">
    <property type="protein sequence ID" value="OsLaMu_06g0001950.01"/>
    <property type="gene ID" value="OsLaMu_06g0001950"/>
</dbReference>
<dbReference type="Gramene" id="OsLima_06g0002210.01">
    <property type="protein sequence ID" value="OsLima_06g0002210.01"/>
    <property type="gene ID" value="OsLima_06g0002210"/>
</dbReference>
<dbReference type="Gramene" id="OsLiXu_06g0002090.01">
    <property type="protein sequence ID" value="OsLiXu_06g0002090.01"/>
    <property type="gene ID" value="OsLiXu_06g0002090"/>
</dbReference>
<dbReference type="Gramene" id="OsMH63_06G002080_01">
    <property type="protein sequence ID" value="OsMH63_06G002080_01"/>
    <property type="gene ID" value="OsMH63_06G002080"/>
</dbReference>
<dbReference type="Gramene" id="OsPr106_06g0002130.01">
    <property type="protein sequence ID" value="OsPr106_06g0002130.01"/>
    <property type="gene ID" value="OsPr106_06g0002130"/>
</dbReference>
<dbReference type="Gramene" id="OsZS97_06G002060_01">
    <property type="protein sequence ID" value="OsZS97_06G002060_01"/>
    <property type="gene ID" value="OsZS97_06G002060"/>
</dbReference>
<dbReference type="HOGENOM" id="CLU_078295_4_0_1"/>
<dbReference type="OMA" id="HIFAEMA"/>
<dbReference type="OrthoDB" id="652632at2759"/>
<dbReference type="Proteomes" id="UP000007015">
    <property type="component" value="Chromosome 3"/>
</dbReference>
<dbReference type="ExpressionAtlas" id="A2XHJ3">
    <property type="expression patterns" value="differential"/>
</dbReference>
<dbReference type="GO" id="GO:0000786">
    <property type="term" value="C:nucleosome"/>
    <property type="evidence" value="ECO:0007669"/>
    <property type="project" value="UniProtKB-KW"/>
</dbReference>
<dbReference type="GO" id="GO:0005634">
    <property type="term" value="C:nucleus"/>
    <property type="evidence" value="ECO:0007669"/>
    <property type="project" value="UniProtKB-SubCell"/>
</dbReference>
<dbReference type="GO" id="GO:0003677">
    <property type="term" value="F:DNA binding"/>
    <property type="evidence" value="ECO:0007669"/>
    <property type="project" value="UniProtKB-KW"/>
</dbReference>
<dbReference type="GO" id="GO:0046982">
    <property type="term" value="F:protein heterodimerization activity"/>
    <property type="evidence" value="ECO:0007669"/>
    <property type="project" value="InterPro"/>
</dbReference>
<dbReference type="GO" id="GO:0030527">
    <property type="term" value="F:structural constituent of chromatin"/>
    <property type="evidence" value="ECO:0007669"/>
    <property type="project" value="InterPro"/>
</dbReference>
<dbReference type="CDD" id="cd22911">
    <property type="entry name" value="HFD_H3"/>
    <property type="match status" value="1"/>
</dbReference>
<dbReference type="FunFam" id="1.10.20.10:FF:000078">
    <property type="entry name" value="Histone H3"/>
    <property type="match status" value="1"/>
</dbReference>
<dbReference type="FunFam" id="1.10.20.10:FF:000044">
    <property type="entry name" value="Histone H3.3"/>
    <property type="match status" value="1"/>
</dbReference>
<dbReference type="Gene3D" id="1.10.20.10">
    <property type="entry name" value="Histone, subunit A"/>
    <property type="match status" value="1"/>
</dbReference>
<dbReference type="InterPro" id="IPR009072">
    <property type="entry name" value="Histone-fold"/>
</dbReference>
<dbReference type="InterPro" id="IPR007125">
    <property type="entry name" value="Histone_H2A/H2B/H3"/>
</dbReference>
<dbReference type="InterPro" id="IPR000164">
    <property type="entry name" value="Histone_H3/CENP-A"/>
</dbReference>
<dbReference type="PANTHER" id="PTHR11426">
    <property type="entry name" value="HISTONE H3"/>
    <property type="match status" value="1"/>
</dbReference>
<dbReference type="Pfam" id="PF00125">
    <property type="entry name" value="Histone"/>
    <property type="match status" value="1"/>
</dbReference>
<dbReference type="PRINTS" id="PR00622">
    <property type="entry name" value="HISTONEH3"/>
</dbReference>
<dbReference type="SMART" id="SM00428">
    <property type="entry name" value="H3"/>
    <property type="match status" value="1"/>
</dbReference>
<dbReference type="SUPFAM" id="SSF47113">
    <property type="entry name" value="Histone-fold"/>
    <property type="match status" value="1"/>
</dbReference>
<dbReference type="PROSITE" id="PS00322">
    <property type="entry name" value="HISTONE_H3_1"/>
    <property type="match status" value="1"/>
</dbReference>
<dbReference type="PROSITE" id="PS00959">
    <property type="entry name" value="HISTONE_H3_2"/>
    <property type="match status" value="1"/>
</dbReference>
<name>H33_ORYSI</name>
<reference key="1">
    <citation type="journal article" date="2005" name="PLoS Biol.">
        <title>The genomes of Oryza sativa: a history of duplications.</title>
        <authorList>
            <person name="Yu J."/>
            <person name="Wang J."/>
            <person name="Lin W."/>
            <person name="Li S."/>
            <person name="Li H."/>
            <person name="Zhou J."/>
            <person name="Ni P."/>
            <person name="Dong W."/>
            <person name="Hu S."/>
            <person name="Zeng C."/>
            <person name="Zhang J."/>
            <person name="Zhang Y."/>
            <person name="Li R."/>
            <person name="Xu Z."/>
            <person name="Li S."/>
            <person name="Li X."/>
            <person name="Zheng H."/>
            <person name="Cong L."/>
            <person name="Lin L."/>
            <person name="Yin J."/>
            <person name="Geng J."/>
            <person name="Li G."/>
            <person name="Shi J."/>
            <person name="Liu J."/>
            <person name="Lv H."/>
            <person name="Li J."/>
            <person name="Wang J."/>
            <person name="Deng Y."/>
            <person name="Ran L."/>
            <person name="Shi X."/>
            <person name="Wang X."/>
            <person name="Wu Q."/>
            <person name="Li C."/>
            <person name="Ren X."/>
            <person name="Wang J."/>
            <person name="Wang X."/>
            <person name="Li D."/>
            <person name="Liu D."/>
            <person name="Zhang X."/>
            <person name="Ji Z."/>
            <person name="Zhao W."/>
            <person name="Sun Y."/>
            <person name="Zhang Z."/>
            <person name="Bao J."/>
            <person name="Han Y."/>
            <person name="Dong L."/>
            <person name="Ji J."/>
            <person name="Chen P."/>
            <person name="Wu S."/>
            <person name="Liu J."/>
            <person name="Xiao Y."/>
            <person name="Bu D."/>
            <person name="Tan J."/>
            <person name="Yang L."/>
            <person name="Ye C."/>
            <person name="Zhang J."/>
            <person name="Xu J."/>
            <person name="Zhou Y."/>
            <person name="Yu Y."/>
            <person name="Zhang B."/>
            <person name="Zhuang S."/>
            <person name="Wei H."/>
            <person name="Liu B."/>
            <person name="Lei M."/>
            <person name="Yu H."/>
            <person name="Li Y."/>
            <person name="Xu H."/>
            <person name="Wei S."/>
            <person name="He X."/>
            <person name="Fang L."/>
            <person name="Zhang Z."/>
            <person name="Zhang Y."/>
            <person name="Huang X."/>
            <person name="Su Z."/>
            <person name="Tong W."/>
            <person name="Li J."/>
            <person name="Tong Z."/>
            <person name="Li S."/>
            <person name="Ye J."/>
            <person name="Wang L."/>
            <person name="Fang L."/>
            <person name="Lei T."/>
            <person name="Chen C.-S."/>
            <person name="Chen H.-C."/>
            <person name="Xu Z."/>
            <person name="Li H."/>
            <person name="Huang H."/>
            <person name="Zhang F."/>
            <person name="Xu H."/>
            <person name="Li N."/>
            <person name="Zhao C."/>
            <person name="Li S."/>
            <person name="Dong L."/>
            <person name="Huang Y."/>
            <person name="Li L."/>
            <person name="Xi Y."/>
            <person name="Qi Q."/>
            <person name="Li W."/>
            <person name="Zhang B."/>
            <person name="Hu W."/>
            <person name="Zhang Y."/>
            <person name="Tian X."/>
            <person name="Jiao Y."/>
            <person name="Liang X."/>
            <person name="Jin J."/>
            <person name="Gao L."/>
            <person name="Zheng W."/>
            <person name="Hao B."/>
            <person name="Liu S.-M."/>
            <person name="Wang W."/>
            <person name="Yuan L."/>
            <person name="Cao M."/>
            <person name="McDermott J."/>
            <person name="Samudrala R."/>
            <person name="Wang J."/>
            <person name="Wong G.K.-S."/>
            <person name="Yang H."/>
        </authorList>
    </citation>
    <scope>NUCLEOTIDE SEQUENCE [LARGE SCALE GENOMIC DNA]</scope>
    <source>
        <strain>cv. 93-11</strain>
    </source>
</reference>
<reference key="2">
    <citation type="journal article" date="2002" name="Nature">
        <title>Sequence and analysis of rice chromosome 4.</title>
        <authorList>
            <person name="Feng Q."/>
            <person name="Zhang Y."/>
            <person name="Hao P."/>
            <person name="Wang S."/>
            <person name="Fu G."/>
            <person name="Huang Y."/>
            <person name="Li Y."/>
            <person name="Zhu J."/>
            <person name="Liu Y."/>
            <person name="Hu X."/>
            <person name="Jia P."/>
            <person name="Zhang Y."/>
            <person name="Zhao Q."/>
            <person name="Ying K."/>
            <person name="Yu S."/>
            <person name="Tang Y."/>
            <person name="Weng Q."/>
            <person name="Zhang L."/>
            <person name="Lu Y."/>
            <person name="Mu J."/>
            <person name="Lu Y."/>
            <person name="Zhang L.S."/>
            <person name="Yu Z."/>
            <person name="Fan D."/>
            <person name="Liu X."/>
            <person name="Lu T."/>
            <person name="Li C."/>
            <person name="Wu Y."/>
            <person name="Sun T."/>
            <person name="Lei H."/>
            <person name="Li T."/>
            <person name="Hu H."/>
            <person name="Guan J."/>
            <person name="Wu M."/>
            <person name="Zhang R."/>
            <person name="Zhou B."/>
            <person name="Chen Z."/>
            <person name="Chen L."/>
            <person name="Jin Z."/>
            <person name="Wang R."/>
            <person name="Yin H."/>
            <person name="Cai Z."/>
            <person name="Ren S."/>
            <person name="Lv G."/>
            <person name="Gu W."/>
            <person name="Zhu G."/>
            <person name="Tu Y."/>
            <person name="Jia J."/>
            <person name="Zhang Y."/>
            <person name="Chen J."/>
            <person name="Kang H."/>
            <person name="Chen X."/>
            <person name="Shao C."/>
            <person name="Sun Y."/>
            <person name="Hu Q."/>
            <person name="Zhang X."/>
            <person name="Zhang W."/>
            <person name="Wang L."/>
            <person name="Ding C."/>
            <person name="Sheng H."/>
            <person name="Gu J."/>
            <person name="Chen S."/>
            <person name="Ni L."/>
            <person name="Zhu F."/>
            <person name="Chen W."/>
            <person name="Lan L."/>
            <person name="Lai Y."/>
            <person name="Cheng Z."/>
            <person name="Gu M."/>
            <person name="Jiang J."/>
            <person name="Li J."/>
            <person name="Hong G."/>
            <person name="Xue Y."/>
            <person name="Han B."/>
        </authorList>
    </citation>
    <scope>NUCLEOTIDE SEQUENCE [LARGE SCALE GENOMIC DNA]</scope>
    <source>
        <strain>cv. Guang-Lu-Ai No.4</strain>
    </source>
</reference>
<feature type="initiator methionine" description="Removed" evidence="1">
    <location>
        <position position="1"/>
    </location>
</feature>
<feature type="chain" id="PRO_0000295655" description="Histone H3.3">
    <location>
        <begin position="2"/>
        <end position="136"/>
    </location>
</feature>
<feature type="region of interest" description="Disordered" evidence="2">
    <location>
        <begin position="1"/>
        <end position="43"/>
    </location>
</feature>
<feature type="modified residue" description="N6-methylated lysine" evidence="1">
    <location>
        <position position="5"/>
    </location>
</feature>
<feature type="modified residue" description="N6-acetyllysine; alternate" evidence="1">
    <location>
        <position position="10"/>
    </location>
</feature>
<feature type="modified residue" description="N6-methylated lysine; alternate" evidence="1">
    <location>
        <position position="10"/>
    </location>
</feature>
<feature type="modified residue" description="Phosphoserine" evidence="1">
    <location>
        <position position="11"/>
    </location>
</feature>
<feature type="modified residue" description="Phosphothreonine" evidence="1">
    <location>
        <position position="12"/>
    </location>
</feature>
<feature type="modified residue" description="N6-acetyllysine" evidence="1">
    <location>
        <position position="15"/>
    </location>
</feature>
<feature type="modified residue" description="N6-acetyllysine; alternate" evidence="1">
    <location>
        <position position="19"/>
    </location>
</feature>
<feature type="modified residue" description="N6-methylated lysine; alternate" evidence="1">
    <location>
        <position position="19"/>
    </location>
</feature>
<feature type="modified residue" description="N6-acetyllysine; alternate" evidence="1">
    <location>
        <position position="24"/>
    </location>
</feature>
<feature type="modified residue" description="N6-methylated lysine; alternate" evidence="1">
    <location>
        <position position="24"/>
    </location>
</feature>
<feature type="modified residue" description="N6-methylated lysine" evidence="1">
    <location>
        <position position="28"/>
    </location>
</feature>
<feature type="modified residue" description="Phosphoserine" evidence="1">
    <location>
        <position position="29"/>
    </location>
</feature>
<feature type="modified residue" description="N6-methylated lysine; alternate" evidence="1">
    <location>
        <position position="37"/>
    </location>
</feature>
<accession>A2XHJ3</accession>
<accession>Q71UF0</accession>
<accession>Q7F8L1</accession>
<accession>Q8SA80</accession>
<proteinExistence type="inferred from homology"/>
<organism>
    <name type="scientific">Oryza sativa subsp. indica</name>
    <name type="common">Rice</name>
    <dbReference type="NCBI Taxonomy" id="39946"/>
    <lineage>
        <taxon>Eukaryota</taxon>
        <taxon>Viridiplantae</taxon>
        <taxon>Streptophyta</taxon>
        <taxon>Embryophyta</taxon>
        <taxon>Tracheophyta</taxon>
        <taxon>Spermatophyta</taxon>
        <taxon>Magnoliopsida</taxon>
        <taxon>Liliopsida</taxon>
        <taxon>Poales</taxon>
        <taxon>Poaceae</taxon>
        <taxon>BOP clade</taxon>
        <taxon>Oryzoideae</taxon>
        <taxon>Oryzeae</taxon>
        <taxon>Oryzinae</taxon>
        <taxon>Oryza</taxon>
        <taxon>Oryza sativa</taxon>
    </lineage>
</organism>
<gene>
    <name type="ORF">OsI_011536</name>
</gene>
<gene>
    <name type="ORF">H0815C01.1</name>
    <name type="ORF">H0818E04.22</name>
</gene>
<sequence>MARTKQTARKSTGGKAPRKQLATKAARKSAPTTGGVKKPHRYRPGTVALREIRKYQKSTELLIRKLPFQRLVREIAQDFKTDLRFQSHAVLALQEAAEAYLVGLFEDTNLCAIHAKRVTIMPKDIQLARRIRGERA</sequence>
<evidence type="ECO:0000250" key="1"/>
<evidence type="ECO:0000256" key="2">
    <source>
        <dbReference type="SAM" id="MobiDB-lite"/>
    </source>
</evidence>
<evidence type="ECO:0000305" key="3"/>